<gene>
    <name type="primary">Naca</name>
    <name type="synonym">Gm1878</name>
</gene>
<accession>P70670</accession>
<accession>E9QMB1</accession>
<comment type="function">
    <text evidence="5 6 7">Cardiac- and muscle-specific transcription factor. May act to regulate the expression of genes involved in the development of myotubes. Plays a critical role in ventricular cardiomyocyte expansion and regulates postnatal skeletal muscle growth and regeneration. Involved in the organized assembly of thick and thin filaments of myofibril sarcomeres.</text>
</comment>
<comment type="subunit">
    <text evidence="4 5">Interacts (via PXLXP motif) with the muscle-restricted histone methyltransferase SMYD1 (via MYND-type zinc finger).</text>
</comment>
<comment type="subcellular location">
    <subcellularLocation>
        <location evidence="4">Cytoplasm</location>
    </subcellularLocation>
    <subcellularLocation>
        <location evidence="4">Nucleus</location>
    </subcellularLocation>
</comment>
<comment type="alternative products">
    <event type="alternative splicing"/>
    <isoform>
        <id>P70670-1</id>
        <name>2</name>
        <name>Gp220</name>
        <name>skNAC</name>
        <sequence type="displayed"/>
    </isoform>
    <isoform>
        <id>Q60817-1</id>
        <name>1</name>
        <sequence type="external"/>
    </isoform>
</comment>
<comment type="tissue specificity">
    <text evidence="7">Specifically expressed in heart and skeletal muscle: it is present in differentiated myotubes but not in myoblasts.</text>
</comment>
<comment type="developmental stage">
    <text>Expressed concomitant with the onset of mineralization in ossification centers of developing bone.</text>
</comment>
<comment type="induction">
    <text>Induced in muscle by wounding.</text>
</comment>
<comment type="PTM">
    <text>Phosphorylation of Ser-2015 by ILK during cell adhesion may promote nuclear localization. Phosphorylation of Thr-2131 by GSK3B may promote proteasome mediated degradation.</text>
</comment>
<comment type="disruption phenotype">
    <text evidence="5">Partial embryonic lethality by embryonic day 12.5, with ventricular hypoplasia and decreased cardiomyocyte proliferation. Viable skNAC(-/-) adult mice have reduced postnatal skeletal muscle growth and impaired regenerative capacity after cardiotoxin-induced injury. Satellite cells have impaired survival compared with wild-type.</text>
</comment>
<comment type="similarity">
    <text evidence="8">Belongs to the NAC-alpha family.</text>
</comment>
<feature type="chain" id="PRO_0000135578" description="Nascent polypeptide-associated complex subunit alpha, muscle-specific form">
    <location>
        <begin position="1"/>
        <end position="2187"/>
    </location>
</feature>
<feature type="domain" description="NAC-A/B" evidence="2">
    <location>
        <begin position="2042"/>
        <end position="2107"/>
    </location>
</feature>
<feature type="domain" description="UBA">
    <location>
        <begin position="2148"/>
        <end position="2185"/>
    </location>
</feature>
<feature type="region of interest" description="Disordered" evidence="3">
    <location>
        <begin position="1"/>
        <end position="20"/>
    </location>
</feature>
<feature type="region of interest" description="Disordered" evidence="3">
    <location>
        <begin position="32"/>
        <end position="73"/>
    </location>
</feature>
<feature type="region of interest" description="Disordered" evidence="3">
    <location>
        <begin position="172"/>
        <end position="196"/>
    </location>
</feature>
<feature type="region of interest" description="Disordered" evidence="3">
    <location>
        <begin position="335"/>
        <end position="370"/>
    </location>
</feature>
<feature type="region of interest" description="Disordered" evidence="3">
    <location>
        <begin position="579"/>
        <end position="611"/>
    </location>
</feature>
<feature type="region of interest" description="Disordered" evidence="3">
    <location>
        <begin position="738"/>
        <end position="835"/>
    </location>
</feature>
<feature type="region of interest" description="Disordered" evidence="3">
    <location>
        <begin position="884"/>
        <end position="1847"/>
    </location>
</feature>
<feature type="region of interest" description="Disordered" evidence="3">
    <location>
        <begin position="1892"/>
        <end position="2053"/>
    </location>
</feature>
<feature type="region of interest" description="Required for DNA-binding">
    <location>
        <begin position="2041"/>
        <end position="2052"/>
    </location>
</feature>
<feature type="short sequence motif" description="PXLXP">
    <location>
        <begin position="1950"/>
        <end position="1954"/>
    </location>
</feature>
<feature type="compositionally biased region" description="Polar residues" evidence="3">
    <location>
        <begin position="9"/>
        <end position="20"/>
    </location>
</feature>
<feature type="compositionally biased region" description="Polar residues" evidence="3">
    <location>
        <begin position="178"/>
        <end position="192"/>
    </location>
</feature>
<feature type="compositionally biased region" description="Polar residues" evidence="3">
    <location>
        <begin position="347"/>
        <end position="369"/>
    </location>
</feature>
<feature type="compositionally biased region" description="Polar residues" evidence="3">
    <location>
        <begin position="599"/>
        <end position="609"/>
    </location>
</feature>
<feature type="compositionally biased region" description="Polar residues" evidence="3">
    <location>
        <begin position="818"/>
        <end position="835"/>
    </location>
</feature>
<feature type="compositionally biased region" description="Polar residues" evidence="3">
    <location>
        <begin position="887"/>
        <end position="905"/>
    </location>
</feature>
<feature type="compositionally biased region" description="Pro residues" evidence="3">
    <location>
        <begin position="941"/>
        <end position="951"/>
    </location>
</feature>
<feature type="compositionally biased region" description="Low complexity" evidence="3">
    <location>
        <begin position="976"/>
        <end position="998"/>
    </location>
</feature>
<feature type="compositionally biased region" description="Polar residues" evidence="3">
    <location>
        <begin position="1106"/>
        <end position="1122"/>
    </location>
</feature>
<feature type="compositionally biased region" description="Low complexity" evidence="3">
    <location>
        <begin position="1174"/>
        <end position="1195"/>
    </location>
</feature>
<feature type="compositionally biased region" description="Polar residues" evidence="3">
    <location>
        <begin position="1429"/>
        <end position="1440"/>
    </location>
</feature>
<feature type="compositionally biased region" description="Low complexity" evidence="3">
    <location>
        <begin position="1489"/>
        <end position="1504"/>
    </location>
</feature>
<feature type="compositionally biased region" description="Polar residues" evidence="3">
    <location>
        <begin position="1609"/>
        <end position="1631"/>
    </location>
</feature>
<feature type="compositionally biased region" description="Low complexity" evidence="3">
    <location>
        <begin position="1636"/>
        <end position="1670"/>
    </location>
</feature>
<feature type="compositionally biased region" description="Low complexity" evidence="3">
    <location>
        <begin position="1714"/>
        <end position="1727"/>
    </location>
</feature>
<feature type="compositionally biased region" description="Polar residues" evidence="3">
    <location>
        <begin position="1762"/>
        <end position="1772"/>
    </location>
</feature>
<feature type="compositionally biased region" description="Low complexity" evidence="3">
    <location>
        <begin position="1806"/>
        <end position="1823"/>
    </location>
</feature>
<feature type="compositionally biased region" description="Low complexity" evidence="3">
    <location>
        <begin position="1892"/>
        <end position="1914"/>
    </location>
</feature>
<feature type="compositionally biased region" description="Pro residues" evidence="3">
    <location>
        <begin position="1973"/>
        <end position="1983"/>
    </location>
</feature>
<feature type="compositionally biased region" description="Acidic residues" evidence="3">
    <location>
        <begin position="2001"/>
        <end position="2014"/>
    </location>
</feature>
<feature type="compositionally biased region" description="Low complexity" evidence="3">
    <location>
        <begin position="2016"/>
        <end position="2029"/>
    </location>
</feature>
<feature type="modified residue" description="Asymmetric dimethylarginine" evidence="14">
    <location>
        <position position="247"/>
    </location>
</feature>
<feature type="modified residue" description="Phosphothreonine" evidence="12">
    <location>
        <position position="590"/>
    </location>
</feature>
<feature type="modified residue" description="Phosphoserine" evidence="12">
    <location>
        <position position="822"/>
    </location>
</feature>
<feature type="modified residue" description="Phosphoserine" evidence="12">
    <location>
        <position position="1174"/>
    </location>
</feature>
<feature type="modified residue" description="Phosphoserine" evidence="12">
    <location>
        <position position="1177"/>
    </location>
</feature>
<feature type="modified residue" description="Phosphothreonine" evidence="12">
    <location>
        <position position="1364"/>
    </location>
</feature>
<feature type="modified residue" description="Phosphoserine" evidence="12">
    <location>
        <position position="1368"/>
    </location>
</feature>
<feature type="modified residue" description="Phosphoserine" evidence="12">
    <location>
        <position position="1392"/>
    </location>
</feature>
<feature type="modified residue" description="Phosphothreonine" evidence="12">
    <location>
        <position position="1398"/>
    </location>
</feature>
<feature type="modified residue" description="Phosphoserine" evidence="12">
    <location>
        <position position="1400"/>
    </location>
</feature>
<feature type="modified residue" description="Phosphoserine" evidence="12">
    <location>
        <position position="1423"/>
    </location>
</feature>
<feature type="modified residue" description="Phosphoserine" evidence="12">
    <location>
        <position position="1492"/>
    </location>
</feature>
<feature type="modified residue" description="Phosphoserine; by ILK1" evidence="8">
    <location>
        <position position="2015"/>
    </location>
</feature>
<feature type="modified residue" description="Phosphoserine" evidence="1">
    <location>
        <position position="2104"/>
    </location>
</feature>
<feature type="modified residue" description="N6-acetyllysine; alternate" evidence="13">
    <location>
        <position position="2114"/>
    </location>
</feature>
<feature type="modified residue" description="Phosphothreonine; by GSK3-beta" evidence="8 12">
    <location>
        <position position="2131"/>
    </location>
</feature>
<feature type="modified residue" description="Phosphothreonine" evidence="1">
    <location>
        <position position="2133"/>
    </location>
</feature>
<feature type="modified residue" description="Phosphoserine" evidence="9 10 11 12">
    <location>
        <position position="2138"/>
    </location>
</feature>
<feature type="modified residue" description="Phosphoserine" evidence="1">
    <location>
        <position position="2158"/>
    </location>
</feature>
<feature type="modified residue" description="Phosphoserine" evidence="1">
    <location>
        <position position="2163"/>
    </location>
</feature>
<feature type="modified residue" description="Phosphoserine" evidence="1">
    <location>
        <position position="2175"/>
    </location>
</feature>
<feature type="cross-link" description="Glycyl lysine isopeptide (Lys-Gly) (interchain with G-Cter in SUMO2); alternate" evidence="1">
    <location>
        <position position="2114"/>
    </location>
</feature>
<feature type="mutagenesis site" description="Loss of interaction with SMYD1." evidence="4">
    <original>L</original>
    <variation>A</variation>
    <location>
        <position position="1952"/>
    </location>
</feature>
<feature type="sequence conflict" description="In Ref. 1; AAB18734/AAB18732." evidence="8" ref="1">
    <original>P</original>
    <variation>Q</variation>
    <location>
        <position position="941"/>
    </location>
</feature>
<feature type="sequence conflict" description="In Ref. 1; AAB18734/AAB18732." evidence="8" ref="1">
    <original>A</original>
    <variation>G</variation>
    <location>
        <position position="1523"/>
    </location>
</feature>
<feature type="sequence conflict" description="In Ref. 1; AAB18734/AAB18732." evidence="8" ref="1">
    <original>A</original>
    <variation>R</variation>
    <location>
        <position position="1653"/>
    </location>
</feature>
<organism>
    <name type="scientific">Mus musculus</name>
    <name type="common">Mouse</name>
    <dbReference type="NCBI Taxonomy" id="10090"/>
    <lineage>
        <taxon>Eukaryota</taxon>
        <taxon>Metazoa</taxon>
        <taxon>Chordata</taxon>
        <taxon>Craniata</taxon>
        <taxon>Vertebrata</taxon>
        <taxon>Euteleostomi</taxon>
        <taxon>Mammalia</taxon>
        <taxon>Eutheria</taxon>
        <taxon>Euarchontoglires</taxon>
        <taxon>Glires</taxon>
        <taxon>Rodentia</taxon>
        <taxon>Myomorpha</taxon>
        <taxon>Muroidea</taxon>
        <taxon>Muridae</taxon>
        <taxon>Murinae</taxon>
        <taxon>Mus</taxon>
        <taxon>Mus</taxon>
    </lineage>
</organism>
<proteinExistence type="evidence at protein level"/>
<protein>
    <recommendedName>
        <fullName>Nascent polypeptide-associated complex subunit alpha, muscle-specific form</fullName>
    </recommendedName>
    <alternativeName>
        <fullName>Alpha-NAC, muscle-specific form</fullName>
        <shortName>skNAC</shortName>
    </alternativeName>
</protein>
<reference key="1">
    <citation type="journal article" date="1996" name="Genes Dev.">
        <title>Differential splicing-in of a proline-rich exon converts alphaNAC into a muscle-specific transcription factor.</title>
        <authorList>
            <person name="Yotov W.V."/>
            <person name="St Arnaud R."/>
        </authorList>
    </citation>
    <scope>NUCLEOTIDE SEQUENCE [GENOMIC DNA / MRNA] (ISOFORM 2)</scope>
    <scope>FUNCTION</scope>
    <scope>ALTERNATIVE SPLICING</scope>
    <scope>TISSUE SPECIFICITY</scope>
</reference>
<reference key="2">
    <citation type="journal article" date="2009" name="PLoS Biol.">
        <title>Lineage-specific biology revealed by a finished genome assembly of the mouse.</title>
        <authorList>
            <person name="Church D.M."/>
            <person name="Goodstadt L."/>
            <person name="Hillier L.W."/>
            <person name="Zody M.C."/>
            <person name="Goldstein S."/>
            <person name="She X."/>
            <person name="Bult C.J."/>
            <person name="Agarwala R."/>
            <person name="Cherry J.L."/>
            <person name="DiCuccio M."/>
            <person name="Hlavina W."/>
            <person name="Kapustin Y."/>
            <person name="Meric P."/>
            <person name="Maglott D."/>
            <person name="Birtle Z."/>
            <person name="Marques A.C."/>
            <person name="Graves T."/>
            <person name="Zhou S."/>
            <person name="Teague B."/>
            <person name="Potamousis K."/>
            <person name="Churas C."/>
            <person name="Place M."/>
            <person name="Herschleb J."/>
            <person name="Runnheim R."/>
            <person name="Forrest D."/>
            <person name="Amos-Landgraf J."/>
            <person name="Schwartz D.C."/>
            <person name="Cheng Z."/>
            <person name="Lindblad-Toh K."/>
            <person name="Eichler E.E."/>
            <person name="Ponting C.P."/>
        </authorList>
    </citation>
    <scope>NUCLEOTIDE SEQUENCE [LARGE SCALE GENOMIC DNA]</scope>
    <source>
        <strain>C57BL/6J</strain>
    </source>
</reference>
<reference key="3">
    <citation type="journal article" date="2002" name="J. Biol. Chem.">
        <title>m-Bop, a repressor protein essential for cardiogenesis, interacts with skNAC, a heart- and muscle-specific transcription factor.</title>
        <authorList>
            <person name="Sims R.J. III"/>
            <person name="Weihe E.K."/>
            <person name="Zhu L."/>
            <person name="O'Malley S."/>
            <person name="Harriss J.V."/>
            <person name="Gottlieb P.D."/>
        </authorList>
    </citation>
    <scope>INTERACTION WITH SMYD1</scope>
    <scope>MUTAGENESIS OF LEU-1952</scope>
    <scope>SUBCELLULAR LOCATION</scope>
</reference>
<reference key="4">
    <citation type="journal article" date="2004" name="Mol. Cell. Proteomics">
        <title>Phosphoproteomic analysis of the developing mouse brain.</title>
        <authorList>
            <person name="Ballif B.A."/>
            <person name="Villen J."/>
            <person name="Beausoleil S.A."/>
            <person name="Schwartz D."/>
            <person name="Gygi S.P."/>
        </authorList>
    </citation>
    <scope>PHOSPHORYLATION [LARGE SCALE ANALYSIS] AT SER-2138</scope>
    <scope>IDENTIFICATION BY MASS SPECTROMETRY [LARGE SCALE ANALYSIS]</scope>
    <source>
        <tissue>Embryonic brain</tissue>
    </source>
</reference>
<reference key="5">
    <citation type="journal article" date="2007" name="Proc. Natl. Acad. Sci. U.S.A.">
        <title>Large-scale phosphorylation analysis of mouse liver.</title>
        <authorList>
            <person name="Villen J."/>
            <person name="Beausoleil S.A."/>
            <person name="Gerber S.A."/>
            <person name="Gygi S.P."/>
        </authorList>
    </citation>
    <scope>PHOSPHORYLATION [LARGE SCALE ANALYSIS] AT SER-2138</scope>
    <scope>IDENTIFICATION BY MASS SPECTROMETRY [LARGE SCALE ANALYSIS]</scope>
    <source>
        <tissue>Liver</tissue>
    </source>
</reference>
<reference key="6">
    <citation type="journal article" date="2009" name="Immunity">
        <title>The phagosomal proteome in interferon-gamma-activated macrophages.</title>
        <authorList>
            <person name="Trost M."/>
            <person name="English L."/>
            <person name="Lemieux S."/>
            <person name="Courcelles M."/>
            <person name="Desjardins M."/>
            <person name="Thibault P."/>
        </authorList>
    </citation>
    <scope>PHOSPHORYLATION [LARGE SCALE ANALYSIS] AT SER-2138</scope>
    <scope>IDENTIFICATION BY MASS SPECTROMETRY [LARGE SCALE ANALYSIS]</scope>
</reference>
<reference key="7">
    <citation type="journal article" date="2010" name="Cell">
        <title>A tissue-specific atlas of mouse protein phosphorylation and expression.</title>
        <authorList>
            <person name="Huttlin E.L."/>
            <person name="Jedrychowski M.P."/>
            <person name="Elias J.E."/>
            <person name="Goswami T."/>
            <person name="Rad R."/>
            <person name="Beausoleil S.A."/>
            <person name="Villen J."/>
            <person name="Haas W."/>
            <person name="Sowa M.E."/>
            <person name="Gygi S.P."/>
        </authorList>
    </citation>
    <scope>PHOSPHORYLATION [LARGE SCALE ANALYSIS] AT THR-590; SER-822; SER-1174; SER-1177; THR-1364; SER-1368; SER-1392; THR-1398; SER-1400; SER-1423; SER-1492; THR-2131 AND SER-2138</scope>
    <scope>IDENTIFICATION BY MASS SPECTROMETRY [LARGE SCALE ANALYSIS]</scope>
    <source>
        <tissue>Brain</tissue>
        <tissue>Brown adipose tissue</tissue>
        <tissue>Heart</tissue>
        <tissue>Kidney</tissue>
        <tissue>Liver</tissue>
        <tissue>Lung</tissue>
        <tissue>Pancreas</tissue>
        <tissue>Spleen</tissue>
        <tissue>Testis</tissue>
    </source>
</reference>
<reference key="8">
    <citation type="journal article" date="2010" name="Proc. Natl. Acad. Sci. U.S.A.">
        <title>skNAC, a Smyd1-interacting transcription factor, is involved in cardiac development and skeletal muscle growth and regeneration.</title>
        <authorList>
            <person name="Park C.Y."/>
            <person name="Pierce S.A."/>
            <person name="von Drehle M."/>
            <person name="Ivey K.N."/>
            <person name="Morgan J.A."/>
            <person name="Blau H.M."/>
            <person name="Srivastava D."/>
        </authorList>
    </citation>
    <scope>FUNCTION</scope>
    <scope>INTERACTION WITH SMYD1</scope>
    <scope>DISRUPTION PHENOTYPE</scope>
</reference>
<reference key="9">
    <citation type="journal article" date="2013" name="Biochem. J.">
        <title>skNAC depletion stimulates myoblast migration and perturbs sarcomerogenesis by enhancing calpain 1 and 3 activity.</title>
        <authorList>
            <person name="Berkholz J."/>
            <person name="Zakrzewicz A."/>
            <person name="Munz B."/>
        </authorList>
    </citation>
    <scope>FUNCTION</scope>
</reference>
<reference key="10">
    <citation type="journal article" date="2013" name="Mol. Cell">
        <title>SIRT5-mediated lysine desuccinylation impacts diverse metabolic pathways.</title>
        <authorList>
            <person name="Park J."/>
            <person name="Chen Y."/>
            <person name="Tishkoff D.X."/>
            <person name="Peng C."/>
            <person name="Tan M."/>
            <person name="Dai L."/>
            <person name="Xie Z."/>
            <person name="Zhang Y."/>
            <person name="Zwaans B.M."/>
            <person name="Skinner M.E."/>
            <person name="Lombard D.B."/>
            <person name="Zhao Y."/>
        </authorList>
    </citation>
    <scope>ACETYLATION [LARGE SCALE ANALYSIS] AT LYS-2114</scope>
    <scope>IDENTIFICATION BY MASS SPECTROMETRY [LARGE SCALE ANALYSIS]</scope>
    <source>
        <tissue>Embryonic fibroblast</tissue>
    </source>
</reference>
<reference key="11">
    <citation type="journal article" date="2014" name="Mol. Cell. Proteomics">
        <title>Immunoaffinity enrichment and mass spectrometry analysis of protein methylation.</title>
        <authorList>
            <person name="Guo A."/>
            <person name="Gu H."/>
            <person name="Zhou J."/>
            <person name="Mulhern D."/>
            <person name="Wang Y."/>
            <person name="Lee K.A."/>
            <person name="Yang V."/>
            <person name="Aguiar M."/>
            <person name="Kornhauser J."/>
            <person name="Jia X."/>
            <person name="Ren J."/>
            <person name="Beausoleil S.A."/>
            <person name="Silva J.C."/>
            <person name="Vemulapalli V."/>
            <person name="Bedford M.T."/>
            <person name="Comb M.J."/>
        </authorList>
    </citation>
    <scope>METHYLATION [LARGE SCALE ANALYSIS] AT ARG-247</scope>
    <scope>IDENTIFICATION BY MASS SPECTROMETRY [LARGE SCALE ANALYSIS]</scope>
    <source>
        <tissue>Brain</tissue>
    </source>
</reference>
<keyword id="KW-0007">Acetylation</keyword>
<keyword id="KW-0010">Activator</keyword>
<keyword id="KW-0025">Alternative splicing</keyword>
<keyword id="KW-0963">Cytoplasm</keyword>
<keyword id="KW-0238">DNA-binding</keyword>
<keyword id="KW-1017">Isopeptide bond</keyword>
<keyword id="KW-0488">Methylation</keyword>
<keyword id="KW-0539">Nucleus</keyword>
<keyword id="KW-0597">Phosphoprotein</keyword>
<keyword id="KW-1185">Reference proteome</keyword>
<keyword id="KW-0804">Transcription</keyword>
<keyword id="KW-0805">Transcription regulation</keyword>
<keyword id="KW-0813">Transport</keyword>
<keyword id="KW-0832">Ubl conjugation</keyword>
<dbReference type="EMBL" id="U48364">
    <property type="protein sequence ID" value="AAB18734.1"/>
    <property type="molecule type" value="mRNA"/>
</dbReference>
<dbReference type="EMBL" id="U48363">
    <property type="protein sequence ID" value="AAB18732.1"/>
    <property type="molecule type" value="Genomic_DNA"/>
</dbReference>
<dbReference type="EMBL" id="AC131120">
    <property type="status" value="NOT_ANNOTATED_CDS"/>
    <property type="molecule type" value="Genomic_DNA"/>
</dbReference>
<dbReference type="CCDS" id="CCDS48723.1">
    <molecule id="P70670-1"/>
</dbReference>
<dbReference type="PIR" id="T30826">
    <property type="entry name" value="T30826"/>
</dbReference>
<dbReference type="RefSeq" id="NP_001106670.1">
    <molecule id="P70670-1"/>
    <property type="nucleotide sequence ID" value="NM_001113199.2"/>
</dbReference>
<dbReference type="RefSeq" id="NP_038636.2">
    <property type="nucleotide sequence ID" value="NM_013608.3"/>
</dbReference>
<dbReference type="RefSeq" id="XP_036011564.1">
    <molecule id="P70670-1"/>
    <property type="nucleotide sequence ID" value="XM_036155671.1"/>
</dbReference>
<dbReference type="SMR" id="P70670"/>
<dbReference type="BioGRID" id="201682">
    <property type="interactions" value="28"/>
</dbReference>
<dbReference type="ELM" id="P70670"/>
<dbReference type="FunCoup" id="P70670">
    <property type="interactions" value="735"/>
</dbReference>
<dbReference type="IntAct" id="P70670">
    <property type="interactions" value="6"/>
</dbReference>
<dbReference type="MINT" id="P70670"/>
<dbReference type="STRING" id="10090.ENSMUSP00000089680"/>
<dbReference type="GlyGen" id="P70670">
    <property type="glycosylation" value="58 sites, 1 O-linked glycan (49 sites)"/>
</dbReference>
<dbReference type="iPTMnet" id="P70670"/>
<dbReference type="PhosphoSitePlus" id="P70670"/>
<dbReference type="SwissPalm" id="P70670"/>
<dbReference type="jPOST" id="P70670"/>
<dbReference type="PaxDb" id="10090-ENSMUSP00000089680"/>
<dbReference type="PeptideAtlas" id="P70670"/>
<dbReference type="ProteomicsDB" id="252644">
    <molecule id="P70670-1"/>
</dbReference>
<dbReference type="Pumba" id="P70670"/>
<dbReference type="Antibodypedia" id="28384">
    <property type="antibodies" value="96 antibodies from 17 providers"/>
</dbReference>
<dbReference type="DNASU" id="17938"/>
<dbReference type="Ensembl" id="ENSMUST00000092048.13">
    <molecule id="P70670-1"/>
    <property type="protein sequence ID" value="ENSMUSP00000089680.6"/>
    <property type="gene ID" value="ENSMUSG00000061315.15"/>
</dbReference>
<dbReference type="GeneID" id="17938"/>
<dbReference type="KEGG" id="mmu:17938"/>
<dbReference type="UCSC" id="uc007hlc.2">
    <molecule id="P70670-1"/>
    <property type="organism name" value="mouse"/>
</dbReference>
<dbReference type="AGR" id="MGI:106095"/>
<dbReference type="CTD" id="4666"/>
<dbReference type="MGI" id="MGI:106095">
    <property type="gene designation" value="Naca"/>
</dbReference>
<dbReference type="VEuPathDB" id="HostDB:ENSMUSG00000061315"/>
<dbReference type="eggNOG" id="KOG2239">
    <property type="taxonomic scope" value="Eukaryota"/>
</dbReference>
<dbReference type="GeneTree" id="ENSGT00440000033468"/>
<dbReference type="HOGENOM" id="CLU_237256_0_0_1"/>
<dbReference type="InParanoid" id="P70670"/>
<dbReference type="OMA" id="PHKGAPT"/>
<dbReference type="OrthoDB" id="3169036at2759"/>
<dbReference type="PhylomeDB" id="P70670"/>
<dbReference type="TreeFam" id="TF313348"/>
<dbReference type="BioGRID-ORCS" id="17938">
    <property type="hits" value="27 hits in 78 CRISPR screens"/>
</dbReference>
<dbReference type="ChiTaRS" id="Naca">
    <property type="organism name" value="mouse"/>
</dbReference>
<dbReference type="Proteomes" id="UP000000589">
    <property type="component" value="Chromosome 10"/>
</dbReference>
<dbReference type="RNAct" id="P70670">
    <property type="molecule type" value="protein"/>
</dbReference>
<dbReference type="Bgee" id="ENSMUSG00000061315">
    <property type="expression patterns" value="Expressed in ventricular zone and 69 other cell types or tissues"/>
</dbReference>
<dbReference type="ExpressionAtlas" id="P70670">
    <property type="expression patterns" value="baseline and differential"/>
</dbReference>
<dbReference type="GO" id="GO:0005737">
    <property type="term" value="C:cytoplasm"/>
    <property type="evidence" value="ECO:0000314"/>
    <property type="project" value="MGI"/>
</dbReference>
<dbReference type="GO" id="GO:0005854">
    <property type="term" value="C:nascent polypeptide-associated complex"/>
    <property type="evidence" value="ECO:0007669"/>
    <property type="project" value="InterPro"/>
</dbReference>
<dbReference type="GO" id="GO:0005634">
    <property type="term" value="C:nucleus"/>
    <property type="evidence" value="ECO:0000314"/>
    <property type="project" value="MGI"/>
</dbReference>
<dbReference type="GO" id="GO:0003677">
    <property type="term" value="F:DNA binding"/>
    <property type="evidence" value="ECO:0007669"/>
    <property type="project" value="UniProtKB-KW"/>
</dbReference>
<dbReference type="GO" id="GO:0017025">
    <property type="term" value="F:TBP-class protein binding"/>
    <property type="evidence" value="ECO:0000314"/>
    <property type="project" value="MGI"/>
</dbReference>
<dbReference type="GO" id="GO:0003713">
    <property type="term" value="F:transcription coactivator activity"/>
    <property type="evidence" value="ECO:0000314"/>
    <property type="project" value="MGI"/>
</dbReference>
<dbReference type="GO" id="GO:0051451">
    <property type="term" value="P:myoblast migration"/>
    <property type="evidence" value="ECO:0000315"/>
    <property type="project" value="MGI"/>
</dbReference>
<dbReference type="CDD" id="cd22054">
    <property type="entry name" value="NAC_NACA"/>
    <property type="match status" value="1"/>
</dbReference>
<dbReference type="CDD" id="cd14415">
    <property type="entry name" value="UBA_NACA_NACP1"/>
    <property type="match status" value="1"/>
</dbReference>
<dbReference type="FunFam" id="2.20.70.30:FF:000002">
    <property type="entry name" value="Nascent polypeptide-associated complex (NAC), alpha subunit"/>
    <property type="match status" value="1"/>
</dbReference>
<dbReference type="FunFam" id="1.10.8.10:FF:000006">
    <property type="entry name" value="Putative nascent polypeptide-associated complex subunit alpha"/>
    <property type="match status" value="1"/>
</dbReference>
<dbReference type="Gene3D" id="1.10.8.10">
    <property type="entry name" value="DNA helicase RuvA subunit, C-terminal domain"/>
    <property type="match status" value="1"/>
</dbReference>
<dbReference type="Gene3D" id="2.20.70.30">
    <property type="entry name" value="Nascent polypeptide-associated complex domain"/>
    <property type="match status" value="1"/>
</dbReference>
<dbReference type="InterPro" id="IPR016641">
    <property type="entry name" value="EGD2/NACA0like"/>
</dbReference>
<dbReference type="InterPro" id="IPR044034">
    <property type="entry name" value="NAC-like_UBA"/>
</dbReference>
<dbReference type="InterPro" id="IPR038187">
    <property type="entry name" value="NAC_A/B_dom_sf"/>
</dbReference>
<dbReference type="InterPro" id="IPR002715">
    <property type="entry name" value="Nas_poly-pep-assoc_cplx_dom"/>
</dbReference>
<dbReference type="PANTHER" id="PTHR21713">
    <property type="entry name" value="NASCENT POLYPEPTIDE ASSOCIATED COMPLEX ALPHA SUBUNIT-RELATED"/>
    <property type="match status" value="1"/>
</dbReference>
<dbReference type="Pfam" id="PF01849">
    <property type="entry name" value="NAC"/>
    <property type="match status" value="1"/>
</dbReference>
<dbReference type="Pfam" id="PF19026">
    <property type="entry name" value="UBA_HYPK"/>
    <property type="match status" value="1"/>
</dbReference>
<dbReference type="SMART" id="SM01407">
    <property type="entry name" value="NAC"/>
    <property type="match status" value="1"/>
</dbReference>
<dbReference type="PROSITE" id="PS51151">
    <property type="entry name" value="NAC_AB"/>
    <property type="match status" value="1"/>
</dbReference>
<name>NACAM_MOUSE</name>
<sequence length="2187" mass="220499">MPGEATETVPATEQELPQPQAETAVLPMSSALKVAAVGQPGPTPPSSLGPQQSPIVTAHQPSPLPSSVSSTPFEVPFAQPITAETALPSGTAPPTPTFLPHLIGPPISPAALALASPMIGLAQKGARSSSAPLSLVALAPHSVQKSSVCPPHPLTSPPSAAGAELGALTASIPPLEPKTSTSQVPSQGTLNLKGTAPCPPDVVRAFPSHLENPLASVQPGLMSCPQTLSNTSPVKGVPISSALTQSRLSLNLKGPVSPPARNTAAPSIPLAPSTSLGCHLPLLHHSSVDSPIQPPGQSGLAVSNPTSVGHSGIAASCPPERCVVPALPSRLLAVDSGAAPSDDKGSSAVTNELCSPPGSSNVAGTSLSPKASLVPKGSNVALQPLVTQVPASQKTGLKEIPVSCIGATHHALDNPSAISVAPATHVPPPTSSGLVSSKDPASPVTSLVVPAAHKQFPAPPASATLGVPVSPLPATEGLKNLPISALVNVGAPVSPAQAGLPTRKDTTLQPLAPIALKESPSSQSASSLEVLSEDTVTKKTTGGPAPVVRPAIAGVATTTSLRADSPPAVIRADSCVSPNTVSQPLKRSVTDPAMAPRTAKNTAPSTTSPLVPLASEGCPVASSMALSPQNASVSETALALSPEIPKSVPFPDPPLAEISFSNARKVDAVSHMESSGSSRQGHPDASVTAKGTVVCLADSSLDTSVSASKGSALSGASSPLYPLEVSFLPEAGLAVQGPKGSLNKLSPTPPSSKGAPVPSTGAPPSPKGAPIVPTESSISSKQVPAEILPSPQKTPEVTASRLISAVQSPKVDPIMSDVTPTSPKKTSATAVPKDTSATLSLKSVPAVTSLSPPKAPVAPSNEATIVPTEIPTSLKNALAAATPKETLATSIPKVTSPSPQKTPKSVSLKGAPAMTSKKATEIAASKDVSPSQFPKEVPLLPHVPPTSPPKSPVSDTLSGALTSPPPKGPPATLAETPTYPKKSPKPAASKKTPATPSPEGVTAVPLEIPPCSKKAPKTAAPKESSATSSSKRAPKTAVSKEIPSKGVTAVPLEISLPLKETSKSATPGEKSASSPKRSPKTAGPKETPPGGVTAVPPEISLPPKETPQNATPNESLAASSQKRSPKTSVPKETPPGGVTAMPLEIPSAPQKAPKTAVPKQIPTPEDAVTILAGSPLSPKKASKTAAPKEAPATPSVGVIAVSGEISPSPKKTSKTAAPKENSATLPPKRSPKTAAPKETPATSSEGVTAVPSEISPSPPTPASKGVPVTLTPKGAPNALAESPASPKKVPKTAAPEETSTTPSPQKIPKVAGPKEASATPPSKKTPKTAVPKETSAPSEGVTAVPLEIPPSPRKAPKTAAPKETPAPSPEGATTAPVQIPPSPRKGSKKAGSKETPTTPSPEGVTAAPLEIPISSKKTSKMASPKETLVTPSSKKLSQTVGPKETSLEGATAVPLEIPPSHKKAPKTVDPKQVPLTPSPKDAPTTLAESPSSPKKAPKTAAPPSERVTTVPPEKPATPQKASATTASKVPVPAETQEVAVSSRETPVTPAVPPVKNPSSHKKTSKTIELKEAPATLPPSPTKSPKIPSSKKAPRTSAPKEFPASPSIKPVTTSLAQTAPPSLQKAPSTTIPKENLAAPAVLPVSSKSPAAPAAASASLSPATAAPQTAPKEATTIPSCKKAAATETPIETSTAPSLEGAPKETSETSVSKVLMSSPPKKASSSKRASTLPATTLPSLKEASVLSPTATSSGKDSHISPVSDACSTGTTTPQASEKLPSKKGPTAFTEMLAAPAPESALAITAPIQKSPGANSNSASSPKCPDPSSKKDTKGLPSAVALAPQTVPVEKDTSKAIETLLVSPAKGSDCLHSPKGPVGSQVATPLAAFTSDKVPPEAVSASVAPKPAPAASLTLAPSPVAPLPPKQPLLESAPGSVLESPSKLPVPAEEDELPPLIPPEAVSGGEPFQPILVNMPAPKPAGTPAPAPSAKQPVLKNNKGSGTESDSDESVPELEEQDSTQTATQQAQLAAAAEIDEEPVSKAKQSRSEKKARKAMSKLGLRQVTGVTRVTIRKSKNILFVITKPDVYKSPASDTYIVFGEAKIEDLSQQAQLAAAEKFKVQGEAVSNIQENTQTPTVQEESEEEEVDETGVEVKDIELVMSQANVSRAKAVRALKNNSNDIVNAIMELTM</sequence>
<evidence type="ECO:0000250" key="1">
    <source>
        <dbReference type="UniProtKB" id="E9PAV3"/>
    </source>
</evidence>
<evidence type="ECO:0000255" key="2">
    <source>
        <dbReference type="PROSITE-ProRule" id="PRU00507"/>
    </source>
</evidence>
<evidence type="ECO:0000256" key="3">
    <source>
        <dbReference type="SAM" id="MobiDB-lite"/>
    </source>
</evidence>
<evidence type="ECO:0000269" key="4">
    <source>
    </source>
</evidence>
<evidence type="ECO:0000269" key="5">
    <source>
    </source>
</evidence>
<evidence type="ECO:0000269" key="6">
    <source>
    </source>
</evidence>
<evidence type="ECO:0000269" key="7">
    <source>
    </source>
</evidence>
<evidence type="ECO:0000305" key="8"/>
<evidence type="ECO:0007744" key="9">
    <source>
    </source>
</evidence>
<evidence type="ECO:0007744" key="10">
    <source>
    </source>
</evidence>
<evidence type="ECO:0007744" key="11">
    <source>
    </source>
</evidence>
<evidence type="ECO:0007744" key="12">
    <source>
    </source>
</evidence>
<evidence type="ECO:0007744" key="13">
    <source>
    </source>
</evidence>
<evidence type="ECO:0007744" key="14">
    <source>
    </source>
</evidence>